<comment type="function">
    <text evidence="2">With S4 and S5 plays an important role in translational accuracy.</text>
</comment>
<comment type="function">
    <text evidence="2">Interacts with and stabilizes bases of the 16S rRNA that are involved in tRNA selection in the A site and with the mRNA backbone. Located at the interface of the 30S and 50S subunits, it traverses the body of the 30S subunit contacting proteins on the other side and probably holding the rRNA structure together. The combined cluster of proteins S8, S12 and S17 appears to hold together the shoulder and platform of the 30S subunit.</text>
</comment>
<comment type="subunit">
    <text evidence="2">Part of the 30S ribosomal subunit. Contacts proteins S8 and S17. May interact with IF1 in the 30S initiation complex.</text>
</comment>
<comment type="similarity">
    <text evidence="2">Belongs to the universal ribosomal protein uS12 family.</text>
</comment>
<feature type="chain" id="PRO_0000263574" description="Small ribosomal subunit protein uS12">
    <location>
        <begin position="1"/>
        <end position="125"/>
    </location>
</feature>
<feature type="region of interest" description="Disordered" evidence="3">
    <location>
        <begin position="9"/>
        <end position="31"/>
    </location>
</feature>
<feature type="region of interest" description="Disordered" evidence="3">
    <location>
        <begin position="106"/>
        <end position="125"/>
    </location>
</feature>
<feature type="compositionally biased region" description="Basic residues" evidence="3">
    <location>
        <begin position="113"/>
        <end position="125"/>
    </location>
</feature>
<feature type="modified residue" description="3-methylthioaspartic acid" evidence="1">
    <location>
        <position position="89"/>
    </location>
</feature>
<protein>
    <recommendedName>
        <fullName evidence="2">Small ribosomal subunit protein uS12</fullName>
    </recommendedName>
    <alternativeName>
        <fullName evidence="4">30S ribosomal protein S12</fullName>
    </alternativeName>
</protein>
<evidence type="ECO:0000250" key="1"/>
<evidence type="ECO:0000255" key="2">
    <source>
        <dbReference type="HAMAP-Rule" id="MF_00403"/>
    </source>
</evidence>
<evidence type="ECO:0000256" key="3">
    <source>
        <dbReference type="SAM" id="MobiDB-lite"/>
    </source>
</evidence>
<evidence type="ECO:0000305" key="4"/>
<keyword id="KW-0488">Methylation</keyword>
<keyword id="KW-1185">Reference proteome</keyword>
<keyword id="KW-0687">Ribonucleoprotein</keyword>
<keyword id="KW-0689">Ribosomal protein</keyword>
<keyword id="KW-0694">RNA-binding</keyword>
<keyword id="KW-0699">rRNA-binding</keyword>
<keyword id="KW-0820">tRNA-binding</keyword>
<proteinExistence type="inferred from homology"/>
<accession>Q12GX6</accession>
<reference key="1">
    <citation type="journal article" date="2008" name="Appl. Environ. Microbiol.">
        <title>The genome of Polaromonas sp. strain JS666: insights into the evolution of a hydrocarbon- and xenobiotic-degrading bacterium, and features of relevance to biotechnology.</title>
        <authorList>
            <person name="Mattes T.E."/>
            <person name="Alexander A.K."/>
            <person name="Richardson P.M."/>
            <person name="Munk A.C."/>
            <person name="Han C.S."/>
            <person name="Stothard P."/>
            <person name="Coleman N.V."/>
        </authorList>
    </citation>
    <scope>NUCLEOTIDE SEQUENCE [LARGE SCALE GENOMIC DNA]</scope>
    <source>
        <strain>JS666 / ATCC BAA-500</strain>
    </source>
</reference>
<name>RS12_POLSJ</name>
<organism>
    <name type="scientific">Polaromonas sp. (strain JS666 / ATCC BAA-500)</name>
    <dbReference type="NCBI Taxonomy" id="296591"/>
    <lineage>
        <taxon>Bacteria</taxon>
        <taxon>Pseudomonadati</taxon>
        <taxon>Pseudomonadota</taxon>
        <taxon>Betaproteobacteria</taxon>
        <taxon>Burkholderiales</taxon>
        <taxon>Comamonadaceae</taxon>
        <taxon>Polaromonas</taxon>
    </lineage>
</organism>
<sequence>MPTINQLVRQGREVEKIKSKSPAMENSPQRRGVCTRVYTTTPKKPNSALRKVAKVRLTNGFEIISYIGGEGHNLQEHSVVLVRGGRVKDLPGVRYHIVRGSLDLQGVKDRKQSRSKYGAKRPKKA</sequence>
<dbReference type="EMBL" id="CP000316">
    <property type="protein sequence ID" value="ABE42216.1"/>
    <property type="molecule type" value="Genomic_DNA"/>
</dbReference>
<dbReference type="RefSeq" id="WP_011481225.1">
    <property type="nucleotide sequence ID" value="NC_007948.1"/>
</dbReference>
<dbReference type="SMR" id="Q12GX6"/>
<dbReference type="STRING" id="296591.Bpro_0251"/>
<dbReference type="KEGG" id="pol:Bpro_0251"/>
<dbReference type="eggNOG" id="COG0048">
    <property type="taxonomic scope" value="Bacteria"/>
</dbReference>
<dbReference type="HOGENOM" id="CLU_104295_1_2_4"/>
<dbReference type="OrthoDB" id="9802366at2"/>
<dbReference type="Proteomes" id="UP000001983">
    <property type="component" value="Chromosome"/>
</dbReference>
<dbReference type="GO" id="GO:0015935">
    <property type="term" value="C:small ribosomal subunit"/>
    <property type="evidence" value="ECO:0007669"/>
    <property type="project" value="InterPro"/>
</dbReference>
<dbReference type="GO" id="GO:0019843">
    <property type="term" value="F:rRNA binding"/>
    <property type="evidence" value="ECO:0007669"/>
    <property type="project" value="UniProtKB-UniRule"/>
</dbReference>
<dbReference type="GO" id="GO:0003735">
    <property type="term" value="F:structural constituent of ribosome"/>
    <property type="evidence" value="ECO:0007669"/>
    <property type="project" value="InterPro"/>
</dbReference>
<dbReference type="GO" id="GO:0000049">
    <property type="term" value="F:tRNA binding"/>
    <property type="evidence" value="ECO:0007669"/>
    <property type="project" value="UniProtKB-UniRule"/>
</dbReference>
<dbReference type="GO" id="GO:0006412">
    <property type="term" value="P:translation"/>
    <property type="evidence" value="ECO:0007669"/>
    <property type="project" value="UniProtKB-UniRule"/>
</dbReference>
<dbReference type="CDD" id="cd03368">
    <property type="entry name" value="Ribosomal_S12"/>
    <property type="match status" value="1"/>
</dbReference>
<dbReference type="FunFam" id="2.40.50.140:FF:000001">
    <property type="entry name" value="30S ribosomal protein S12"/>
    <property type="match status" value="1"/>
</dbReference>
<dbReference type="Gene3D" id="2.40.50.140">
    <property type="entry name" value="Nucleic acid-binding proteins"/>
    <property type="match status" value="1"/>
</dbReference>
<dbReference type="HAMAP" id="MF_00403_B">
    <property type="entry name" value="Ribosomal_uS12_B"/>
    <property type="match status" value="1"/>
</dbReference>
<dbReference type="InterPro" id="IPR012340">
    <property type="entry name" value="NA-bd_OB-fold"/>
</dbReference>
<dbReference type="InterPro" id="IPR006032">
    <property type="entry name" value="Ribosomal_uS12"/>
</dbReference>
<dbReference type="InterPro" id="IPR005679">
    <property type="entry name" value="Ribosomal_uS12_bac"/>
</dbReference>
<dbReference type="NCBIfam" id="TIGR00981">
    <property type="entry name" value="rpsL_bact"/>
    <property type="match status" value="1"/>
</dbReference>
<dbReference type="PANTHER" id="PTHR11652">
    <property type="entry name" value="30S RIBOSOMAL PROTEIN S12 FAMILY MEMBER"/>
    <property type="match status" value="1"/>
</dbReference>
<dbReference type="Pfam" id="PF00164">
    <property type="entry name" value="Ribosom_S12_S23"/>
    <property type="match status" value="1"/>
</dbReference>
<dbReference type="PIRSF" id="PIRSF002133">
    <property type="entry name" value="Ribosomal_S12/S23"/>
    <property type="match status" value="1"/>
</dbReference>
<dbReference type="PRINTS" id="PR01034">
    <property type="entry name" value="RIBOSOMALS12"/>
</dbReference>
<dbReference type="SUPFAM" id="SSF50249">
    <property type="entry name" value="Nucleic acid-binding proteins"/>
    <property type="match status" value="1"/>
</dbReference>
<dbReference type="PROSITE" id="PS00055">
    <property type="entry name" value="RIBOSOMAL_S12"/>
    <property type="match status" value="1"/>
</dbReference>
<gene>
    <name evidence="2" type="primary">rpsL</name>
    <name type="ordered locus">Bpro_0251</name>
</gene>